<name>SCA2_RICCN</name>
<evidence type="ECO:0000250" key="1"/>
<evidence type="ECO:0000255" key="2"/>
<evidence type="ECO:0000255" key="3">
    <source>
        <dbReference type="PROSITE-ProRule" id="PRU00556"/>
    </source>
</evidence>
<evidence type="ECO:0000256" key="4">
    <source>
        <dbReference type="SAM" id="MobiDB-lite"/>
    </source>
</evidence>
<evidence type="ECO:0007829" key="5">
    <source>
        <dbReference type="PDB" id="4J7O"/>
    </source>
</evidence>
<keyword id="KW-0002">3D-structure</keyword>
<keyword id="KW-0998">Cell outer membrane</keyword>
<keyword id="KW-0472">Membrane</keyword>
<keyword id="KW-0732">Signal</keyword>
<keyword id="KW-0812">Transmembrane</keyword>
<keyword id="KW-1134">Transmembrane beta strand</keyword>
<reference key="1">
    <citation type="journal article" date="2001" name="Science">
        <title>Mechanisms of evolution in Rickettsia conorii and R. prowazekii.</title>
        <authorList>
            <person name="Ogata H."/>
            <person name="Audic S."/>
            <person name="Renesto-Audiffren P."/>
            <person name="Fournier P.-E."/>
            <person name="Barbe V."/>
            <person name="Samson D."/>
            <person name="Roux V."/>
            <person name="Cossart P."/>
            <person name="Weissenbach J."/>
            <person name="Claverie J.-M."/>
            <person name="Raoult D."/>
        </authorList>
    </citation>
    <scope>NUCLEOTIDE SEQUENCE [LARGE SCALE GENOMIC DNA]</scope>
    <source>
        <strain>ATCC VR-613 / Malish 7</strain>
    </source>
</reference>
<reference key="2">
    <citation type="journal article" date="2005" name="Ann. N. Y. Acad. Sci.">
        <title>Phylogenetic study of Rickettsia species using sequences of the autotransporter protein-encoding gene sca2.</title>
        <authorList>
            <person name="Ngwamidiba M."/>
            <person name="Blanc G."/>
            <person name="Ogata H."/>
            <person name="Raoult D."/>
            <person name="Fournier P.-E."/>
        </authorList>
    </citation>
    <scope>IDENTIFICATION AT TRANSCRIPTIONAL LEVEL</scope>
    <source>
        <strain>ATCC VR-613 / Malish 7</strain>
    </source>
</reference>
<comment type="subcellular location">
    <subcellularLocation>
        <location evidence="1">Cell outer membrane</location>
    </subcellularLocation>
</comment>
<feature type="signal peptide" evidence="2">
    <location>
        <begin position="1"/>
        <end position="33"/>
    </location>
</feature>
<feature type="chain" id="PRO_0000262569" description="Putative surface cell antigen sca2">
    <location>
        <begin position="34"/>
        <end position="1795"/>
    </location>
</feature>
<feature type="domain" description="Autotransporter" evidence="3">
    <location>
        <begin position="1516"/>
        <end position="1795"/>
    </location>
</feature>
<feature type="region of interest" description="Disordered" evidence="4">
    <location>
        <begin position="360"/>
        <end position="391"/>
    </location>
</feature>
<feature type="region of interest" description="Disordered" evidence="4">
    <location>
        <begin position="664"/>
        <end position="709"/>
    </location>
</feature>
<feature type="region of interest" description="Disordered" evidence="4">
    <location>
        <begin position="1354"/>
        <end position="1441"/>
    </location>
</feature>
<feature type="compositionally biased region" description="Polar residues" evidence="4">
    <location>
        <begin position="360"/>
        <end position="373"/>
    </location>
</feature>
<feature type="compositionally biased region" description="Pro residues" evidence="4">
    <location>
        <begin position="672"/>
        <end position="700"/>
    </location>
</feature>
<feature type="compositionally biased region" description="Basic and acidic residues" evidence="4">
    <location>
        <begin position="1364"/>
        <end position="1383"/>
    </location>
</feature>
<feature type="compositionally biased region" description="Basic and acidic residues" evidence="4">
    <location>
        <begin position="1398"/>
        <end position="1409"/>
    </location>
</feature>
<feature type="compositionally biased region" description="Acidic residues" evidence="4">
    <location>
        <begin position="1417"/>
        <end position="1432"/>
    </location>
</feature>
<feature type="helix" evidence="5">
    <location>
        <begin position="36"/>
        <end position="41"/>
    </location>
</feature>
<feature type="helix" evidence="5">
    <location>
        <begin position="44"/>
        <end position="46"/>
    </location>
</feature>
<feature type="helix" evidence="5">
    <location>
        <begin position="51"/>
        <end position="60"/>
    </location>
</feature>
<feature type="helix" evidence="5">
    <location>
        <begin position="63"/>
        <end position="72"/>
    </location>
</feature>
<feature type="helix" evidence="5">
    <location>
        <begin position="79"/>
        <end position="86"/>
    </location>
</feature>
<feature type="helix" evidence="5">
    <location>
        <begin position="92"/>
        <end position="96"/>
    </location>
</feature>
<feature type="helix" evidence="5">
    <location>
        <begin position="100"/>
        <end position="121"/>
    </location>
</feature>
<feature type="helix" evidence="5">
    <location>
        <begin position="125"/>
        <end position="135"/>
    </location>
</feature>
<feature type="helix" evidence="5">
    <location>
        <begin position="141"/>
        <end position="147"/>
    </location>
</feature>
<feature type="helix" evidence="5">
    <location>
        <begin position="154"/>
        <end position="156"/>
    </location>
</feature>
<feature type="turn" evidence="5">
    <location>
        <begin position="159"/>
        <end position="161"/>
    </location>
</feature>
<feature type="helix" evidence="5">
    <location>
        <begin position="165"/>
        <end position="196"/>
    </location>
</feature>
<feature type="helix" evidence="5">
    <location>
        <begin position="203"/>
        <end position="210"/>
    </location>
</feature>
<feature type="helix" evidence="5">
    <location>
        <begin position="214"/>
        <end position="238"/>
    </location>
</feature>
<feature type="helix" evidence="5">
    <location>
        <begin position="245"/>
        <end position="252"/>
    </location>
</feature>
<feature type="helix" evidence="5">
    <location>
        <begin position="260"/>
        <end position="281"/>
    </location>
</feature>
<feature type="helix" evidence="5">
    <location>
        <begin position="288"/>
        <end position="295"/>
    </location>
</feature>
<feature type="helix" evidence="5">
    <location>
        <begin position="299"/>
        <end position="323"/>
    </location>
</feature>
<feature type="helix" evidence="5">
    <location>
        <begin position="330"/>
        <end position="337"/>
    </location>
</feature>
<feature type="helix" evidence="5">
    <location>
        <begin position="341"/>
        <end position="360"/>
    </location>
</feature>
<dbReference type="EMBL" id="AE006914">
    <property type="protein sequence ID" value="AAL02648.1"/>
    <property type="molecule type" value="Genomic_DNA"/>
</dbReference>
<dbReference type="PIR" id="F97713">
    <property type="entry name" value="F97713"/>
</dbReference>
<dbReference type="RefSeq" id="WP_010976791.1">
    <property type="nucleotide sequence ID" value="NC_003103.1"/>
</dbReference>
<dbReference type="PDB" id="4J7O">
    <property type="method" value="X-ray"/>
    <property type="resolution" value="2.18 A"/>
    <property type="chains" value="A=34-400"/>
</dbReference>
<dbReference type="PDBsum" id="4J7O"/>
<dbReference type="SMR" id="Q92JF7"/>
<dbReference type="GeneID" id="928084"/>
<dbReference type="KEGG" id="rco:RC0110"/>
<dbReference type="HOGENOM" id="CLU_238220_0_0_5"/>
<dbReference type="EvolutionaryTrace" id="Q92JF7"/>
<dbReference type="Proteomes" id="UP000000816">
    <property type="component" value="Chromosome"/>
</dbReference>
<dbReference type="GO" id="GO:0009279">
    <property type="term" value="C:cell outer membrane"/>
    <property type="evidence" value="ECO:0007669"/>
    <property type="project" value="UniProtKB-SubCell"/>
</dbReference>
<dbReference type="Gene3D" id="2.40.128.130">
    <property type="entry name" value="Autotransporter beta-domain"/>
    <property type="match status" value="1"/>
</dbReference>
<dbReference type="InterPro" id="IPR005546">
    <property type="entry name" value="Autotransporte_beta"/>
</dbReference>
<dbReference type="InterPro" id="IPR036709">
    <property type="entry name" value="Autotransporte_beta_dom_sf"/>
</dbReference>
<dbReference type="InterPro" id="IPR054014">
    <property type="entry name" value="Sca2"/>
</dbReference>
<dbReference type="Pfam" id="PF03797">
    <property type="entry name" value="Autotransporter"/>
    <property type="match status" value="1"/>
</dbReference>
<dbReference type="Pfam" id="PF22203">
    <property type="entry name" value="Sca2"/>
    <property type="match status" value="1"/>
</dbReference>
<dbReference type="SMART" id="SM00869">
    <property type="entry name" value="Autotransporter"/>
    <property type="match status" value="1"/>
</dbReference>
<dbReference type="SUPFAM" id="SSF103515">
    <property type="entry name" value="Autotransporter"/>
    <property type="match status" value="1"/>
</dbReference>
<dbReference type="SUPFAM" id="SSF101447">
    <property type="entry name" value="Formin homology 2 domain (FH2 domain)"/>
    <property type="match status" value="1"/>
</dbReference>
<dbReference type="PROSITE" id="PS51208">
    <property type="entry name" value="AUTOTRANSPORTER"/>
    <property type="match status" value="1"/>
</dbReference>
<organism>
    <name type="scientific">Rickettsia conorii (strain ATCC VR-613 / Malish 7)</name>
    <dbReference type="NCBI Taxonomy" id="272944"/>
    <lineage>
        <taxon>Bacteria</taxon>
        <taxon>Pseudomonadati</taxon>
        <taxon>Pseudomonadota</taxon>
        <taxon>Alphaproteobacteria</taxon>
        <taxon>Rickettsiales</taxon>
        <taxon>Rickettsiaceae</taxon>
        <taxon>Rickettsieae</taxon>
        <taxon>Rickettsia</taxon>
        <taxon>spotted fever group</taxon>
    </lineage>
</organism>
<sequence length="1795" mass="203997">MNLQNSHSKKYVLTFFMSTCLLTSSFLSTSARAASFKDLVSKTPAWEKHNSTQQQNIWKDLTPNEKIKKWQEAALVPSFTQAQNDLGIKYKETDLSSFLDNTRHKARQARAEILLYIERVKQQDFDTKKQAYINQGVVPTDIEAATNLGISYDPSKIDNNVEHDQKVRRAEKDKKAVIELYVSSINRGIKYKHYVDNDIIPEIQEVRTALNMNKDDAQSFVASIRTEIMENAKGQYIADSHIPTEKELKKKFGISRDDNRDGYIKSIRLKVMDKEKPQYIADSHIPTEKELEQKFGADKGEATNYIASIATQMMLDKKSYYIDNNIIPNADELMNEFKIGPVKATSYINQIRAGIEANQFLNNNDTTKPSTGRSQKKSGSKNDHWYMSNQSINNTGTSARIVTGREKKQRYFFDPISTFKTYFNTKASKGNLTQSQHNINRIIQQEENIEEFKNLIKTDPIAALTLQVDSSYKQEAVTTILSDFNDDTIQRVLFSNDKGKLDFNTNIDVKNRPILQELLENSSSEEKTKFAERIQDYATRNISNSQFEEKARLDLIKLAASKDKSSVENFLTLQLELKNRMQPYVVNSVYILTPEIVKEINIELKNKGLIRDSLTKDYMIKLAKEVNNHTLNSVIKVILSDSKILSNETNKILGLAVSNNANNLEQTQSGIPNPPPLPLNGGIPNPPPLPLNGSMPPPPLHSQGFSSNSKHFDLNQLQTEYPHIHSLYVQFTHNTTVQSKAPLQPTASSATSTGRSTPETAYAKLYAEYRTETGGTKANDLQDQLIKRQADLTNVIRQILTESYANQGADEKTLLNLFSISTPEIAEKAKEAFNTLAQDQYIKDITVNGKKTITSEEIIKNLFNEDTDDAIKRILLSSCKISEELKRPIKLEFNKSELIRELQGKQNPFKQLEFAYINTKNFDQDIFGNRIDELINNPNILTIVQQATFLTKEDTNLRKTINSDQAQAKLDDLRTAILSTIKIEELITANLPQHDFIAIVKEKDPELLKEFLKATTLTVTGNNNLDQLRLALPSFTGMSNEQIRILSNKLKMSIILKALKECSQEKATQYIHTGNMPPPPPPPPPLPDSQDLELAYLKSLGITKANTSTFKTTPKTYHFSSDIALRYKEFTLSGQKSAGYKAKYSDADLLKKAIVESVAFEHSKNLSKAHQNNKYFEQIQKAVNTMYSSFIGHRTELEQKIHNIYTSKLLELTKDKEFIKYVEDNIILNKKLTKAFTSADSDFIDSRTELEQKIHNIYIQQLTKYPEEEVKEAFNTASLDFIGPRTEIGQEVHNIYKSQLLELTKDTELCLFTQQVLAEATELEQKYGSDIQSENSNNEKKVERLDQEKLQLFKQENEATNDESSTKDDTQPEDSNKKSEQSDSKTALSPRLLSSNDSKNDKSSDDKKSLLALRSSDEDDTGYATDEEELEESNSTTDEELKKDVVLESEDEAIDVSFKTEAITEQDEVTQRQQVSDDTSGKVAILVQATSTLHKPVHYNINDRLTVAAIGAGDEETSINRGVWISGLYGINKQRIWKNIPKYQNRTTGITIGTDAEFINSHDVIGIAYSRLESQIKYNKKLGKTTVNGHLLSIYSLKELIKGFSLQTITSYGHNYIKNRSKNINNIIGKYQNNSLSFQTLLNYKYRTKYDLHFIPNIGFQYDYSRASNYKEYNVDIENLMIQKKSNQLFESSLGGKIVFKPIVTTNNIVLTPSLYGNIEHHFNNKNTKVNAKATFKGQTLQETIITLKQPKLGYNIGSNILMSRKNINVLLEYNYYTHRKYQSHQGLIKLKVNL</sequence>
<protein>
    <recommendedName>
        <fullName>Putative surface cell antigen sca2</fullName>
    </recommendedName>
</protein>
<gene>
    <name type="primary">sca2</name>
    <name type="ordered locus">RC0110</name>
</gene>
<proteinExistence type="evidence at protein level"/>
<accession>Q92JF7</accession>